<accession>A3N075</accession>
<name>NRDR_ACTP2</name>
<feature type="chain" id="PRO_1000080700" description="Transcriptional repressor NrdR">
    <location>
        <begin position="1"/>
        <end position="149"/>
    </location>
</feature>
<feature type="domain" description="ATP-cone" evidence="1">
    <location>
        <begin position="49"/>
        <end position="139"/>
    </location>
</feature>
<feature type="zinc finger region" evidence="1">
    <location>
        <begin position="3"/>
        <end position="34"/>
    </location>
</feature>
<dbReference type="EMBL" id="CP000569">
    <property type="protein sequence ID" value="ABN73811.1"/>
    <property type="molecule type" value="Genomic_DNA"/>
</dbReference>
<dbReference type="RefSeq" id="WP_005597079.1">
    <property type="nucleotide sequence ID" value="NC_009053.1"/>
</dbReference>
<dbReference type="SMR" id="A3N075"/>
<dbReference type="STRING" id="416269.APL_0711"/>
<dbReference type="EnsemblBacteria" id="ABN73811">
    <property type="protein sequence ID" value="ABN73811"/>
    <property type="gene ID" value="APL_0711"/>
</dbReference>
<dbReference type="GeneID" id="48598892"/>
<dbReference type="KEGG" id="apl:APL_0711"/>
<dbReference type="eggNOG" id="COG1327">
    <property type="taxonomic scope" value="Bacteria"/>
</dbReference>
<dbReference type="HOGENOM" id="CLU_108412_0_0_6"/>
<dbReference type="Proteomes" id="UP000001432">
    <property type="component" value="Chromosome"/>
</dbReference>
<dbReference type="GO" id="GO:0005524">
    <property type="term" value="F:ATP binding"/>
    <property type="evidence" value="ECO:0007669"/>
    <property type="project" value="UniProtKB-KW"/>
</dbReference>
<dbReference type="GO" id="GO:0003677">
    <property type="term" value="F:DNA binding"/>
    <property type="evidence" value="ECO:0007669"/>
    <property type="project" value="UniProtKB-KW"/>
</dbReference>
<dbReference type="GO" id="GO:0008270">
    <property type="term" value="F:zinc ion binding"/>
    <property type="evidence" value="ECO:0007669"/>
    <property type="project" value="UniProtKB-UniRule"/>
</dbReference>
<dbReference type="GO" id="GO:0045892">
    <property type="term" value="P:negative regulation of DNA-templated transcription"/>
    <property type="evidence" value="ECO:0007669"/>
    <property type="project" value="UniProtKB-UniRule"/>
</dbReference>
<dbReference type="HAMAP" id="MF_00440">
    <property type="entry name" value="NrdR"/>
    <property type="match status" value="1"/>
</dbReference>
<dbReference type="InterPro" id="IPR005144">
    <property type="entry name" value="ATP-cone_dom"/>
</dbReference>
<dbReference type="InterPro" id="IPR055173">
    <property type="entry name" value="NrdR-like_N"/>
</dbReference>
<dbReference type="InterPro" id="IPR003796">
    <property type="entry name" value="RNR_NrdR-like"/>
</dbReference>
<dbReference type="NCBIfam" id="TIGR00244">
    <property type="entry name" value="transcriptional regulator NrdR"/>
    <property type="match status" value="1"/>
</dbReference>
<dbReference type="PANTHER" id="PTHR30455">
    <property type="entry name" value="TRANSCRIPTIONAL REPRESSOR NRDR"/>
    <property type="match status" value="1"/>
</dbReference>
<dbReference type="PANTHER" id="PTHR30455:SF2">
    <property type="entry name" value="TRANSCRIPTIONAL REPRESSOR NRDR"/>
    <property type="match status" value="1"/>
</dbReference>
<dbReference type="Pfam" id="PF03477">
    <property type="entry name" value="ATP-cone"/>
    <property type="match status" value="1"/>
</dbReference>
<dbReference type="Pfam" id="PF22811">
    <property type="entry name" value="Zn_ribbon_NrdR"/>
    <property type="match status" value="1"/>
</dbReference>
<dbReference type="PROSITE" id="PS51161">
    <property type="entry name" value="ATP_CONE"/>
    <property type="match status" value="1"/>
</dbReference>
<comment type="function">
    <text evidence="1">Negatively regulates transcription of bacterial ribonucleotide reductase nrd genes and operons by binding to NrdR-boxes.</text>
</comment>
<comment type="cofactor">
    <cofactor evidence="1">
        <name>Zn(2+)</name>
        <dbReference type="ChEBI" id="CHEBI:29105"/>
    </cofactor>
    <text evidence="1">Binds 1 zinc ion.</text>
</comment>
<comment type="similarity">
    <text evidence="1">Belongs to the NrdR family.</text>
</comment>
<proteinExistence type="inferred from homology"/>
<sequence>MRCPFCAAEETKVVDSRLAADGYQIRRRRECTSCKERFTTFESAELVVPYVIKNNGNRVPFDANKLRVSLSRALEKRPVSADDLEKAISKIIIQLQSTGEREVPSKLVGSLAMDALKQLDKVAYIRFASVYLSFDDIEEFTKEIEKLRE</sequence>
<reference key="1">
    <citation type="journal article" date="2008" name="J. Bacteriol.">
        <title>The complete genome sequence of Actinobacillus pleuropneumoniae L20 (serotype 5b).</title>
        <authorList>
            <person name="Foote S.J."/>
            <person name="Bosse J.T."/>
            <person name="Bouevitch A.B."/>
            <person name="Langford P.R."/>
            <person name="Young N.M."/>
            <person name="Nash J.H.E."/>
        </authorList>
    </citation>
    <scope>NUCLEOTIDE SEQUENCE [LARGE SCALE GENOMIC DNA]</scope>
    <source>
        <strain>L20</strain>
    </source>
</reference>
<keyword id="KW-0067">ATP-binding</keyword>
<keyword id="KW-0238">DNA-binding</keyword>
<keyword id="KW-0479">Metal-binding</keyword>
<keyword id="KW-0547">Nucleotide-binding</keyword>
<keyword id="KW-1185">Reference proteome</keyword>
<keyword id="KW-0678">Repressor</keyword>
<keyword id="KW-0804">Transcription</keyword>
<keyword id="KW-0805">Transcription regulation</keyword>
<keyword id="KW-0862">Zinc</keyword>
<keyword id="KW-0863">Zinc-finger</keyword>
<evidence type="ECO:0000255" key="1">
    <source>
        <dbReference type="HAMAP-Rule" id="MF_00440"/>
    </source>
</evidence>
<organism>
    <name type="scientific">Actinobacillus pleuropneumoniae serotype 5b (strain L20)</name>
    <dbReference type="NCBI Taxonomy" id="416269"/>
    <lineage>
        <taxon>Bacteria</taxon>
        <taxon>Pseudomonadati</taxon>
        <taxon>Pseudomonadota</taxon>
        <taxon>Gammaproteobacteria</taxon>
        <taxon>Pasteurellales</taxon>
        <taxon>Pasteurellaceae</taxon>
        <taxon>Actinobacillus</taxon>
    </lineage>
</organism>
<gene>
    <name evidence="1" type="primary">nrdR</name>
    <name type="ordered locus">APL_0711</name>
</gene>
<protein>
    <recommendedName>
        <fullName evidence="1">Transcriptional repressor NrdR</fullName>
    </recommendedName>
</protein>